<feature type="chain" id="PRO_0000075527" description="Insertion element IS406 uncharacterized 13.3 kDa protein">
    <location>
        <begin position="1"/>
        <end position="121"/>
    </location>
</feature>
<reference key="1">
    <citation type="journal article" date="1991" name="Gene">
        <title>IS406 and IS407, two gene-activating insertion sequences for Pseudomonas cepacia.</title>
        <authorList>
            <person name="Wood M.S."/>
            <person name="Byrne A."/>
            <person name="Lessie T.G."/>
        </authorList>
    </citation>
    <scope>NUCLEOTIDE SEQUENCE [GENOMIC DNA]</scope>
</reference>
<evidence type="ECO:0000305" key="1"/>
<dbReference type="EMBL" id="M82979">
    <property type="protein sequence ID" value="AAA25038.1"/>
    <property type="molecule type" value="Genomic_DNA"/>
</dbReference>
<dbReference type="PIR" id="S28799">
    <property type="entry name" value="S28799"/>
</dbReference>
<organism>
    <name type="scientific">Burkholderia multivorans (strain ATCC 17616 / 249)</name>
    <dbReference type="NCBI Taxonomy" id="395019"/>
    <lineage>
        <taxon>Bacteria</taxon>
        <taxon>Pseudomonadati</taxon>
        <taxon>Pseudomonadota</taxon>
        <taxon>Betaproteobacteria</taxon>
        <taxon>Burkholderiales</taxon>
        <taxon>Burkholderiaceae</taxon>
        <taxon>Burkholderia</taxon>
        <taxon>Burkholderia cepacia complex</taxon>
    </lineage>
</organism>
<name>YI62_BURM1</name>
<keyword id="KW-0814">Transposable element</keyword>
<sequence>MLATRVRRRSSRLIRSRPLVVRSRMRCAAGKSNTVRLSGMAVSAHSASFGCSLHQRVRAAFKSRSASVRSGALKMARIWAATVFRASCRVVSAPAFCCRWNWQRCQGTEGSTARRAALSPA</sequence>
<comment type="caution">
    <text evidence="1">This protein may not be real because it is encoded on the opposite frame of insertion element IS406.</text>
</comment>
<protein>
    <recommendedName>
        <fullName>Insertion element IS406 uncharacterized 13.3 kDa protein</fullName>
    </recommendedName>
    <alternativeName>
        <fullName>ORF2</fullName>
    </alternativeName>
</protein>
<accession>P24576</accession>
<proteinExistence type="predicted"/>